<dbReference type="EC" id="2.1.1.171"/>
<dbReference type="EMBL" id="L42023">
    <property type="protein sequence ID" value="AAC22425.1"/>
    <property type="molecule type" value="Genomic_DNA"/>
</dbReference>
<dbReference type="PIR" id="F64158">
    <property type="entry name" value="F64158"/>
</dbReference>
<dbReference type="RefSeq" id="NP_438926.1">
    <property type="nucleotide sequence ID" value="NC_000907.1"/>
</dbReference>
<dbReference type="PDB" id="2IFT">
    <property type="method" value="X-ray"/>
    <property type="resolution" value="2.30 A"/>
    <property type="chains" value="A/B=1-193"/>
</dbReference>
<dbReference type="PDBsum" id="2IFT"/>
<dbReference type="SMR" id="P44869"/>
<dbReference type="STRING" id="71421.HI_0767"/>
<dbReference type="DNASU" id="949786"/>
<dbReference type="EnsemblBacteria" id="AAC22425">
    <property type="protein sequence ID" value="AAC22425"/>
    <property type="gene ID" value="HI_0767"/>
</dbReference>
<dbReference type="KEGG" id="hin:HI_0767"/>
<dbReference type="PATRIC" id="fig|71421.8.peg.806"/>
<dbReference type="eggNOG" id="COG0742">
    <property type="taxonomic scope" value="Bacteria"/>
</dbReference>
<dbReference type="HOGENOM" id="CLU_075826_2_2_6"/>
<dbReference type="OrthoDB" id="9803017at2"/>
<dbReference type="PhylomeDB" id="P44869"/>
<dbReference type="BioCyc" id="HINF71421:G1GJ1-807-MONOMER"/>
<dbReference type="EvolutionaryTrace" id="P44869"/>
<dbReference type="Proteomes" id="UP000000579">
    <property type="component" value="Chromosome"/>
</dbReference>
<dbReference type="GO" id="GO:0052913">
    <property type="term" value="F:16S rRNA (guanine(966)-N(2))-methyltransferase activity"/>
    <property type="evidence" value="ECO:0007669"/>
    <property type="project" value="UniProtKB-EC"/>
</dbReference>
<dbReference type="GO" id="GO:0003676">
    <property type="term" value="F:nucleic acid binding"/>
    <property type="evidence" value="ECO:0007669"/>
    <property type="project" value="InterPro"/>
</dbReference>
<dbReference type="CDD" id="cd02440">
    <property type="entry name" value="AdoMet_MTases"/>
    <property type="match status" value="1"/>
</dbReference>
<dbReference type="Gene3D" id="3.40.50.150">
    <property type="entry name" value="Vaccinia Virus protein VP39"/>
    <property type="match status" value="1"/>
</dbReference>
<dbReference type="InterPro" id="IPR002052">
    <property type="entry name" value="DNA_methylase_N6_adenine_CS"/>
</dbReference>
<dbReference type="InterPro" id="IPR004398">
    <property type="entry name" value="RNA_MeTrfase_RsmD"/>
</dbReference>
<dbReference type="InterPro" id="IPR029063">
    <property type="entry name" value="SAM-dependent_MTases_sf"/>
</dbReference>
<dbReference type="NCBIfam" id="TIGR00095">
    <property type="entry name" value="16S rRNA (guanine(966)-N(2))-methyltransferase RsmD"/>
    <property type="match status" value="1"/>
</dbReference>
<dbReference type="PANTHER" id="PTHR43542">
    <property type="entry name" value="METHYLTRANSFERASE"/>
    <property type="match status" value="1"/>
</dbReference>
<dbReference type="PANTHER" id="PTHR43542:SF1">
    <property type="entry name" value="METHYLTRANSFERASE"/>
    <property type="match status" value="1"/>
</dbReference>
<dbReference type="Pfam" id="PF03602">
    <property type="entry name" value="Cons_hypoth95"/>
    <property type="match status" value="1"/>
</dbReference>
<dbReference type="PIRSF" id="PIRSF004553">
    <property type="entry name" value="CHP00095"/>
    <property type="match status" value="1"/>
</dbReference>
<dbReference type="SUPFAM" id="SSF53335">
    <property type="entry name" value="S-adenosyl-L-methionine-dependent methyltransferases"/>
    <property type="match status" value="1"/>
</dbReference>
<dbReference type="PROSITE" id="PS00092">
    <property type="entry name" value="N6_MTASE"/>
    <property type="match status" value="1"/>
</dbReference>
<protein>
    <recommendedName>
        <fullName>Ribosomal RNA small subunit methyltransferase D</fullName>
        <ecNumber>2.1.1.171</ecNumber>
    </recommendedName>
    <alternativeName>
        <fullName>16S rRNA m2G966 methyltransferase</fullName>
    </alternativeName>
    <alternativeName>
        <fullName>rRNA (guanine-N(2)-)-methyltransferase</fullName>
    </alternativeName>
</protein>
<organism>
    <name type="scientific">Haemophilus influenzae (strain ATCC 51907 / DSM 11121 / KW20 / Rd)</name>
    <dbReference type="NCBI Taxonomy" id="71421"/>
    <lineage>
        <taxon>Bacteria</taxon>
        <taxon>Pseudomonadati</taxon>
        <taxon>Pseudomonadota</taxon>
        <taxon>Gammaproteobacteria</taxon>
        <taxon>Pasteurellales</taxon>
        <taxon>Pasteurellaceae</taxon>
        <taxon>Haemophilus</taxon>
    </lineage>
</organism>
<feature type="chain" id="PRO_0000169550" description="Ribosomal RNA small subunit methyltransferase D">
    <location>
        <begin position="1"/>
        <end position="193"/>
    </location>
</feature>
<feature type="strand" evidence="3">
    <location>
        <begin position="12"/>
        <end position="14"/>
    </location>
</feature>
<feature type="turn" evidence="3">
    <location>
        <begin position="19"/>
        <end position="22"/>
    </location>
</feature>
<feature type="strand" evidence="3">
    <location>
        <begin position="24"/>
        <end position="26"/>
    </location>
</feature>
<feature type="helix" evidence="3">
    <location>
        <begin position="39"/>
        <end position="52"/>
    </location>
</feature>
<feature type="strand" evidence="3">
    <location>
        <begin position="56"/>
        <end position="59"/>
    </location>
</feature>
<feature type="helix" evidence="3">
    <location>
        <begin position="66"/>
        <end position="73"/>
    </location>
</feature>
<feature type="strand" evidence="3">
    <location>
        <begin position="77"/>
        <end position="82"/>
    </location>
</feature>
<feature type="helix" evidence="3">
    <location>
        <begin position="86"/>
        <end position="98"/>
    </location>
</feature>
<feature type="turn" evidence="3">
    <location>
        <begin position="103"/>
        <end position="105"/>
    </location>
</feature>
<feature type="strand" evidence="3">
    <location>
        <begin position="106"/>
        <end position="109"/>
    </location>
</feature>
<feature type="helix" evidence="3">
    <location>
        <begin position="113"/>
        <end position="116"/>
    </location>
</feature>
<feature type="strand" evidence="3">
    <location>
        <begin position="126"/>
        <end position="131"/>
    </location>
</feature>
<feature type="strand" evidence="3">
    <location>
        <begin position="135"/>
        <end position="137"/>
    </location>
</feature>
<feature type="helix" evidence="3">
    <location>
        <begin position="139"/>
        <end position="149"/>
    </location>
</feature>
<feature type="strand" evidence="3">
    <location>
        <begin position="153"/>
        <end position="167"/>
    </location>
</feature>
<feature type="strand" evidence="3">
    <location>
        <begin position="175"/>
        <end position="183"/>
    </location>
</feature>
<feature type="strand" evidence="3">
    <location>
        <begin position="186"/>
        <end position="193"/>
    </location>
</feature>
<proteinExistence type="evidence at protein level"/>
<keyword id="KW-0002">3D-structure</keyword>
<keyword id="KW-0489">Methyltransferase</keyword>
<keyword id="KW-1185">Reference proteome</keyword>
<keyword id="KW-0698">rRNA processing</keyword>
<keyword id="KW-0949">S-adenosyl-L-methionine</keyword>
<keyword id="KW-0808">Transferase</keyword>
<comment type="function">
    <text evidence="1">Specifically methylates the guanine in position 966 of 16S rRNA in the assembled 30S particle.</text>
</comment>
<comment type="catalytic activity">
    <reaction>
        <text>guanosine(966) in 16S rRNA + S-adenosyl-L-methionine = N(2)-methylguanosine(966) in 16S rRNA + S-adenosyl-L-homocysteine + H(+)</text>
        <dbReference type="Rhea" id="RHEA:23548"/>
        <dbReference type="Rhea" id="RHEA-COMP:10211"/>
        <dbReference type="Rhea" id="RHEA-COMP:10212"/>
        <dbReference type="ChEBI" id="CHEBI:15378"/>
        <dbReference type="ChEBI" id="CHEBI:57856"/>
        <dbReference type="ChEBI" id="CHEBI:59789"/>
        <dbReference type="ChEBI" id="CHEBI:74269"/>
        <dbReference type="ChEBI" id="CHEBI:74481"/>
        <dbReference type="EC" id="2.1.1.171"/>
    </reaction>
</comment>
<comment type="similarity">
    <text evidence="2">Belongs to the methyltransferase superfamily. RsmD family.</text>
</comment>
<sequence>MKKIQTPNAKGEVRIIAGLWRGRKLPVLNSEGLRPTGDRVKETLFNWLMPYIHQSECLDGFAGSGSLGFEALSRQAKKVTFLELDKTVANQLKKNLQTLKCSSEQAEVINQSSLDFLKQPQNQPHFDVVFLDPPFHFNLAEQAISLLCENNWLKPNALIYVETEKDKPLITPENWTLLKEKTTGIVSYRLYQN</sequence>
<gene>
    <name type="primary">rsmD</name>
    <name type="ordered locus">HI_0767</name>
</gene>
<name>RSMD_HAEIN</name>
<accession>P44869</accession>
<reference key="1">
    <citation type="journal article" date="1995" name="Science">
        <title>Whole-genome random sequencing and assembly of Haemophilus influenzae Rd.</title>
        <authorList>
            <person name="Fleischmann R.D."/>
            <person name="Adams M.D."/>
            <person name="White O."/>
            <person name="Clayton R.A."/>
            <person name="Kirkness E.F."/>
            <person name="Kerlavage A.R."/>
            <person name="Bult C.J."/>
            <person name="Tomb J.-F."/>
            <person name="Dougherty B.A."/>
            <person name="Merrick J.M."/>
            <person name="McKenney K."/>
            <person name="Sutton G.G."/>
            <person name="FitzHugh W."/>
            <person name="Fields C.A."/>
            <person name="Gocayne J.D."/>
            <person name="Scott J.D."/>
            <person name="Shirley R."/>
            <person name="Liu L.-I."/>
            <person name="Glodek A."/>
            <person name="Kelley J.M."/>
            <person name="Weidman J.F."/>
            <person name="Phillips C.A."/>
            <person name="Spriggs T."/>
            <person name="Hedblom E."/>
            <person name="Cotton M.D."/>
            <person name="Utterback T.R."/>
            <person name="Hanna M.C."/>
            <person name="Nguyen D.T."/>
            <person name="Saudek D.M."/>
            <person name="Brandon R.C."/>
            <person name="Fine L.D."/>
            <person name="Fritchman J.L."/>
            <person name="Fuhrmann J.L."/>
            <person name="Geoghagen N.S.M."/>
            <person name="Gnehm C.L."/>
            <person name="McDonald L.A."/>
            <person name="Small K.V."/>
            <person name="Fraser C.M."/>
            <person name="Smith H.O."/>
            <person name="Venter J.C."/>
        </authorList>
    </citation>
    <scope>NUCLEOTIDE SEQUENCE [LARGE SCALE GENOMIC DNA]</scope>
    <source>
        <strain>ATCC 51907 / DSM 11121 / KW20 / Rd</strain>
    </source>
</reference>
<reference key="2">
    <citation type="submission" date="2006-10" db="PDB data bank">
        <title>Crystal structure of the putative methylase HI0767 from Haemophilus influenzae.</title>
        <authorList>
            <consortium name="Northeast structural genomics consortium (NESG)"/>
        </authorList>
    </citation>
    <scope>X-RAY CRYSTALLOGRAPHY (2.3 ANGSTROMS)</scope>
</reference>
<evidence type="ECO:0000250" key="1"/>
<evidence type="ECO:0000305" key="2"/>
<evidence type="ECO:0007829" key="3">
    <source>
        <dbReference type="PDB" id="2IFT"/>
    </source>
</evidence>